<proteinExistence type="inferred from homology"/>
<sequence>MNFAAMMVVAIGIDLALGWPDALYKRIGHPVTWIARLIARLEKGWNFKGRLRRLRGVLVALAVIGTTVVIALAVQLWLPAGWPGVLIGGILAWPFVALRSMHDHVAAVAKPLIAGDLPGARQAVSMIVGRDPSQLDQPGVARAALESLAENSSDGIVAPLFWGCVAGLPGIAGYKAINTLDSMIGHRTDRYEEFGWASARIDDLVNLIPARLTGLFFALASPCRARALAVMARDARSHRSPNAGWPEAAMAGALAVRLSGPRIYADRVANEPWLNGTAPDPRPADLARGLALYRRAMAGMTLVIGLVAVLWSVS</sequence>
<comment type="function">
    <text evidence="1">Converts cobyric acid to cobinamide by the addition of aminopropanol on the F carboxylic group.</text>
</comment>
<comment type="pathway">
    <text>Cofactor biosynthesis; adenosylcobalamin biosynthesis.</text>
</comment>
<comment type="subcellular location">
    <subcellularLocation>
        <location evidence="3">Cell membrane</location>
        <topology evidence="3">Multi-pass membrane protein</topology>
    </subcellularLocation>
</comment>
<comment type="similarity">
    <text evidence="3">Belongs to the CobD/CbiB family.</text>
</comment>
<organism>
    <name type="scientific">Rhodobacter capsulatus</name>
    <name type="common">Rhodopseudomonas capsulata</name>
    <dbReference type="NCBI Taxonomy" id="1061"/>
    <lineage>
        <taxon>Bacteria</taxon>
        <taxon>Pseudomonadati</taxon>
        <taxon>Pseudomonadota</taxon>
        <taxon>Alphaproteobacteria</taxon>
        <taxon>Rhodobacterales</taxon>
        <taxon>Rhodobacter group</taxon>
        <taxon>Rhodobacter</taxon>
    </lineage>
</organism>
<reference key="1">
    <citation type="journal article" date="1995" name="J. Bacteriol.">
        <title>Identification and sequence analysis of genes involved in late steps in cobalamin (vitamin B12) synthesis in Rhodobacter capsulatus.</title>
        <authorList>
            <person name="Pollich M."/>
            <person name="Klug G."/>
        </authorList>
    </citation>
    <scope>NUCLEOTIDE SEQUENCE [GENOMIC DNA]</scope>
    <source>
        <strain>ATCC 33303 / B10</strain>
    </source>
</reference>
<name>COBD_RHOCA</name>
<dbReference type="EMBL" id="Z46611">
    <property type="protein sequence ID" value="CAA86581.1"/>
    <property type="molecule type" value="Genomic_DNA"/>
</dbReference>
<dbReference type="PIR" id="S52223">
    <property type="entry name" value="S52223"/>
</dbReference>
<dbReference type="UniPathway" id="UPA00148"/>
<dbReference type="GO" id="GO:0005886">
    <property type="term" value="C:plasma membrane"/>
    <property type="evidence" value="ECO:0007669"/>
    <property type="project" value="UniProtKB-SubCell"/>
</dbReference>
<dbReference type="GO" id="GO:0015420">
    <property type="term" value="F:ABC-type vitamin B12 transporter activity"/>
    <property type="evidence" value="ECO:0007669"/>
    <property type="project" value="UniProtKB-UniRule"/>
</dbReference>
<dbReference type="GO" id="GO:0048472">
    <property type="term" value="F:threonine-phosphate decarboxylase activity"/>
    <property type="evidence" value="ECO:0007669"/>
    <property type="project" value="InterPro"/>
</dbReference>
<dbReference type="GO" id="GO:0009236">
    <property type="term" value="P:cobalamin biosynthetic process"/>
    <property type="evidence" value="ECO:0007669"/>
    <property type="project" value="UniProtKB-UniRule"/>
</dbReference>
<dbReference type="HAMAP" id="MF_00024">
    <property type="entry name" value="CobD_CbiB"/>
    <property type="match status" value="1"/>
</dbReference>
<dbReference type="InterPro" id="IPR004485">
    <property type="entry name" value="Cobalamin_biosynth_CobD/CbiB"/>
</dbReference>
<dbReference type="NCBIfam" id="TIGR00380">
    <property type="entry name" value="cobal_cbiB"/>
    <property type="match status" value="1"/>
</dbReference>
<dbReference type="PANTHER" id="PTHR34308">
    <property type="entry name" value="COBALAMIN BIOSYNTHESIS PROTEIN CBIB"/>
    <property type="match status" value="1"/>
</dbReference>
<dbReference type="PANTHER" id="PTHR34308:SF1">
    <property type="entry name" value="COBALAMIN BIOSYNTHESIS PROTEIN CBIB"/>
    <property type="match status" value="1"/>
</dbReference>
<dbReference type="Pfam" id="PF03186">
    <property type="entry name" value="CobD_Cbib"/>
    <property type="match status" value="1"/>
</dbReference>
<accession>P0CY56</accession>
<accession>O68090</accession>
<accession>Q52683</accession>
<gene>
    <name type="primary">cobD</name>
    <name type="synonym">bluD</name>
</gene>
<feature type="chain" id="PRO_0000150935" description="Cobalamin biosynthesis protein CobD">
    <location>
        <begin position="1"/>
        <end position="314"/>
    </location>
</feature>
<feature type="transmembrane region" description="Helical" evidence="2">
    <location>
        <begin position="3"/>
        <end position="23"/>
    </location>
</feature>
<feature type="transmembrane region" description="Helical" evidence="2">
    <location>
        <begin position="57"/>
        <end position="77"/>
    </location>
</feature>
<feature type="transmembrane region" description="Helical" evidence="2">
    <location>
        <begin position="78"/>
        <end position="98"/>
    </location>
</feature>
<feature type="transmembrane region" description="Helical" evidence="2">
    <location>
        <begin position="154"/>
        <end position="174"/>
    </location>
</feature>
<feature type="transmembrane region" description="Helical" evidence="2">
    <location>
        <begin position="290"/>
        <end position="310"/>
    </location>
</feature>
<protein>
    <recommendedName>
        <fullName>Cobalamin biosynthesis protein CobD</fullName>
    </recommendedName>
</protein>
<keyword id="KW-1003">Cell membrane</keyword>
<keyword id="KW-0169">Cobalamin biosynthesis</keyword>
<keyword id="KW-0472">Membrane</keyword>
<keyword id="KW-0812">Transmembrane</keyword>
<keyword id="KW-1133">Transmembrane helix</keyword>
<evidence type="ECO:0000250" key="1"/>
<evidence type="ECO:0000255" key="2"/>
<evidence type="ECO:0000305" key="3"/>